<sequence>MIENILIIGAFLFCIGTYGLITSKNMIKVLMCLELMFNSVNINLVAFSNFFDSESIKGQVFAVFIIAIAAAEAAIGLAIVFALYRNRRSTKVNQFNLLKW</sequence>
<gene>
    <name evidence="1" type="primary">ndhE</name>
</gene>
<protein>
    <recommendedName>
        <fullName evidence="1">NAD(P)H-quinone oxidoreductase subunit 4L, chloroplastic</fullName>
        <ecNumber evidence="1">7.1.1.-</ecNumber>
    </recommendedName>
    <alternativeName>
        <fullName evidence="1">NAD(P)H dehydrogenase subunit 4L</fullName>
    </alternativeName>
    <alternativeName>
        <fullName evidence="1">NADH-plastoquinone oxidoreductase subunit 4L</fullName>
    </alternativeName>
</protein>
<geneLocation type="chloroplast"/>
<reference key="1">
    <citation type="journal article" date="2002" name="Proc. Natl. Acad. Sci. U.S.A.">
        <title>The chloroplast and mitochondrial genome sequences of the charophyte Chaetosphaeridium globosum: insights into the timing of the events that restructured organelle DNAs within the green algal lineage that led to land plants.</title>
        <authorList>
            <person name="Turmel M."/>
            <person name="Otis C."/>
            <person name="Lemieux C."/>
        </authorList>
    </citation>
    <scope>NUCLEOTIDE SEQUENCE [LARGE SCALE GENOMIC DNA]</scope>
    <source>
        <strain>M1311</strain>
    </source>
</reference>
<evidence type="ECO:0000255" key="1">
    <source>
        <dbReference type="HAMAP-Rule" id="MF_01456"/>
    </source>
</evidence>
<comment type="function">
    <text evidence="1">NDH shuttles electrons from NAD(P)H:plastoquinone, via FMN and iron-sulfur (Fe-S) centers, to quinones in the photosynthetic chain and possibly in a chloroplast respiratory chain. The immediate electron acceptor for the enzyme in this species is believed to be plastoquinone. Couples the redox reaction to proton translocation, and thus conserves the redox energy in a proton gradient.</text>
</comment>
<comment type="catalytic activity">
    <reaction evidence="1">
        <text>a plastoquinone + NADH + (n+1) H(+)(in) = a plastoquinol + NAD(+) + n H(+)(out)</text>
        <dbReference type="Rhea" id="RHEA:42608"/>
        <dbReference type="Rhea" id="RHEA-COMP:9561"/>
        <dbReference type="Rhea" id="RHEA-COMP:9562"/>
        <dbReference type="ChEBI" id="CHEBI:15378"/>
        <dbReference type="ChEBI" id="CHEBI:17757"/>
        <dbReference type="ChEBI" id="CHEBI:57540"/>
        <dbReference type="ChEBI" id="CHEBI:57945"/>
        <dbReference type="ChEBI" id="CHEBI:62192"/>
    </reaction>
</comment>
<comment type="catalytic activity">
    <reaction evidence="1">
        <text>a plastoquinone + NADPH + (n+1) H(+)(in) = a plastoquinol + NADP(+) + n H(+)(out)</text>
        <dbReference type="Rhea" id="RHEA:42612"/>
        <dbReference type="Rhea" id="RHEA-COMP:9561"/>
        <dbReference type="Rhea" id="RHEA-COMP:9562"/>
        <dbReference type="ChEBI" id="CHEBI:15378"/>
        <dbReference type="ChEBI" id="CHEBI:17757"/>
        <dbReference type="ChEBI" id="CHEBI:57783"/>
        <dbReference type="ChEBI" id="CHEBI:58349"/>
        <dbReference type="ChEBI" id="CHEBI:62192"/>
    </reaction>
</comment>
<comment type="subunit">
    <text evidence="1">NDH is composed of at least 16 different subunits, 5 of which are encoded in the nucleus.</text>
</comment>
<comment type="subcellular location">
    <subcellularLocation>
        <location evidence="1">Plastid</location>
        <location evidence="1">Chloroplast thylakoid membrane</location>
        <topology evidence="1">Multi-pass membrane protein</topology>
    </subcellularLocation>
</comment>
<comment type="similarity">
    <text evidence="1">Belongs to the complex I subunit 4L family.</text>
</comment>
<accession>Q8M9T9</accession>
<keyword id="KW-0150">Chloroplast</keyword>
<keyword id="KW-0472">Membrane</keyword>
<keyword id="KW-0520">NAD</keyword>
<keyword id="KW-0521">NADP</keyword>
<keyword id="KW-0934">Plastid</keyword>
<keyword id="KW-0618">Plastoquinone</keyword>
<keyword id="KW-0874">Quinone</keyword>
<keyword id="KW-0793">Thylakoid</keyword>
<keyword id="KW-1278">Translocase</keyword>
<keyword id="KW-0812">Transmembrane</keyword>
<keyword id="KW-1133">Transmembrane helix</keyword>
<keyword id="KW-0813">Transport</keyword>
<organism>
    <name type="scientific">Chaetosphaeridium globosum</name>
    <name type="common">Charophycean green alga</name>
    <name type="synonym">Herposteiron globosum</name>
    <dbReference type="NCBI Taxonomy" id="96477"/>
    <lineage>
        <taxon>Eukaryota</taxon>
        <taxon>Viridiplantae</taxon>
        <taxon>Streptophyta</taxon>
        <taxon>Coleochaetophyceae</taxon>
        <taxon>Coleochaetales</taxon>
        <taxon>Chaetosphaeridiaceae</taxon>
        <taxon>Chaetosphaeridium</taxon>
    </lineage>
</organism>
<feature type="chain" id="PRO_0000118505" description="NAD(P)H-quinone oxidoreductase subunit 4L, chloroplastic">
    <location>
        <begin position="1"/>
        <end position="100"/>
    </location>
</feature>
<feature type="transmembrane region" description="Helical" evidence="1">
    <location>
        <begin position="1"/>
        <end position="21"/>
    </location>
</feature>
<feature type="transmembrane region" description="Helical" evidence="1">
    <location>
        <begin position="27"/>
        <end position="47"/>
    </location>
</feature>
<feature type="transmembrane region" description="Helical" evidence="1">
    <location>
        <begin position="61"/>
        <end position="81"/>
    </location>
</feature>
<dbReference type="EC" id="7.1.1.-" evidence="1"/>
<dbReference type="EMBL" id="AF494278">
    <property type="protein sequence ID" value="AAM96518.1"/>
    <property type="molecule type" value="Genomic_DNA"/>
</dbReference>
<dbReference type="RefSeq" id="NP_683854.1">
    <property type="nucleotide sequence ID" value="NC_004115.1"/>
</dbReference>
<dbReference type="SMR" id="Q8M9T9"/>
<dbReference type="GeneID" id="860800"/>
<dbReference type="GO" id="GO:0009535">
    <property type="term" value="C:chloroplast thylakoid membrane"/>
    <property type="evidence" value="ECO:0007669"/>
    <property type="project" value="UniProtKB-SubCell"/>
</dbReference>
<dbReference type="GO" id="GO:0030964">
    <property type="term" value="C:NADH dehydrogenase complex"/>
    <property type="evidence" value="ECO:0007669"/>
    <property type="project" value="TreeGrafter"/>
</dbReference>
<dbReference type="GO" id="GO:0016655">
    <property type="term" value="F:oxidoreductase activity, acting on NAD(P)H, quinone or similar compound as acceptor"/>
    <property type="evidence" value="ECO:0007669"/>
    <property type="project" value="UniProtKB-UniRule"/>
</dbReference>
<dbReference type="GO" id="GO:0048038">
    <property type="term" value="F:quinone binding"/>
    <property type="evidence" value="ECO:0007669"/>
    <property type="project" value="UniProtKB-KW"/>
</dbReference>
<dbReference type="GO" id="GO:0042773">
    <property type="term" value="P:ATP synthesis coupled electron transport"/>
    <property type="evidence" value="ECO:0007669"/>
    <property type="project" value="InterPro"/>
</dbReference>
<dbReference type="GO" id="GO:0019684">
    <property type="term" value="P:photosynthesis, light reaction"/>
    <property type="evidence" value="ECO:0007669"/>
    <property type="project" value="UniProtKB-UniRule"/>
</dbReference>
<dbReference type="FunFam" id="1.10.287.3510:FF:000001">
    <property type="entry name" value="NADH-quinone oxidoreductase subunit K"/>
    <property type="match status" value="1"/>
</dbReference>
<dbReference type="Gene3D" id="1.10.287.3510">
    <property type="match status" value="1"/>
</dbReference>
<dbReference type="HAMAP" id="MF_01456">
    <property type="entry name" value="NDH1_NuoK"/>
    <property type="match status" value="1"/>
</dbReference>
<dbReference type="InterPro" id="IPR001133">
    <property type="entry name" value="NADH_UbQ_OxRdtase_chain4L/K"/>
</dbReference>
<dbReference type="InterPro" id="IPR039428">
    <property type="entry name" value="NUOK/Mnh_C1-like"/>
</dbReference>
<dbReference type="NCBIfam" id="NF004320">
    <property type="entry name" value="PRK05715.1-2"/>
    <property type="match status" value="1"/>
</dbReference>
<dbReference type="NCBIfam" id="NF004322">
    <property type="entry name" value="PRK05715.1-4"/>
    <property type="match status" value="1"/>
</dbReference>
<dbReference type="NCBIfam" id="NF004323">
    <property type="entry name" value="PRK05715.1-5"/>
    <property type="match status" value="1"/>
</dbReference>
<dbReference type="PANTHER" id="PTHR11434:SF16">
    <property type="entry name" value="NADH-UBIQUINONE OXIDOREDUCTASE CHAIN 4L"/>
    <property type="match status" value="1"/>
</dbReference>
<dbReference type="PANTHER" id="PTHR11434">
    <property type="entry name" value="NADH-UBIQUINONE OXIDOREDUCTASE SUBUNIT ND4L"/>
    <property type="match status" value="1"/>
</dbReference>
<dbReference type="Pfam" id="PF00420">
    <property type="entry name" value="Oxidored_q2"/>
    <property type="match status" value="1"/>
</dbReference>
<name>NU4LC_CHAGL</name>
<proteinExistence type="inferred from homology"/>